<feature type="chain" id="PRO_0000123563" description="Isoprenyl transferase">
    <location>
        <begin position="1"/>
        <end position="249"/>
    </location>
</feature>
<feature type="active site" evidence="1">
    <location>
        <position position="29"/>
    </location>
</feature>
<feature type="active site" description="Proton acceptor" evidence="1">
    <location>
        <position position="77"/>
    </location>
</feature>
<feature type="binding site" evidence="1">
    <location>
        <position position="29"/>
    </location>
    <ligand>
        <name>Mg(2+)</name>
        <dbReference type="ChEBI" id="CHEBI:18420"/>
    </ligand>
</feature>
<feature type="binding site" evidence="1">
    <location>
        <begin position="30"/>
        <end position="33"/>
    </location>
    <ligand>
        <name>substrate</name>
    </ligand>
</feature>
<feature type="binding site" evidence="1">
    <location>
        <position position="34"/>
    </location>
    <ligand>
        <name>substrate</name>
    </ligand>
</feature>
<feature type="binding site" evidence="1">
    <location>
        <position position="42"/>
    </location>
    <ligand>
        <name>substrate</name>
    </ligand>
</feature>
<feature type="binding site" evidence="1">
    <location>
        <position position="46"/>
    </location>
    <ligand>
        <name>substrate</name>
    </ligand>
</feature>
<feature type="binding site" evidence="1">
    <location>
        <begin position="74"/>
        <end position="76"/>
    </location>
    <ligand>
        <name>substrate</name>
    </ligand>
</feature>
<feature type="binding site" evidence="1">
    <location>
        <position position="78"/>
    </location>
    <ligand>
        <name>substrate</name>
    </ligand>
</feature>
<feature type="binding site" evidence="1">
    <location>
        <position position="80"/>
    </location>
    <ligand>
        <name>substrate</name>
    </ligand>
</feature>
<feature type="binding site" evidence="1">
    <location>
        <position position="197"/>
    </location>
    <ligand>
        <name>substrate</name>
    </ligand>
</feature>
<feature type="binding site" evidence="1">
    <location>
        <begin position="203"/>
        <end position="205"/>
    </location>
    <ligand>
        <name>substrate</name>
    </ligand>
</feature>
<feature type="binding site" evidence="1">
    <location>
        <position position="216"/>
    </location>
    <ligand>
        <name>Mg(2+)</name>
        <dbReference type="ChEBI" id="CHEBI:18420"/>
    </ligand>
</feature>
<feature type="sequence conflict" description="In Ref. 1; CAA10743." evidence="2" ref="1">
    <original>DLKRELLPKHVA</original>
    <variation>RFKTRTTDPNTLT</variation>
    <location>
        <begin position="14"/>
        <end position="25"/>
    </location>
</feature>
<feature type="sequence conflict" description="In Ref. 1; CAA10743." evidence="2" ref="1">
    <original>WAKR</original>
    <variation>DGLNV</variation>
    <location>
        <begin position="34"/>
        <end position="37"/>
    </location>
</feature>
<comment type="function">
    <text evidence="1">Catalyzes the condensation of isopentenyl diphosphate (IPP) with allylic pyrophosphates generating different type of terpenoids.</text>
</comment>
<comment type="cofactor">
    <cofactor evidence="1">
        <name>Mg(2+)</name>
        <dbReference type="ChEBI" id="CHEBI:18420"/>
    </cofactor>
    <text evidence="1">Binds 2 magnesium ions per subunit.</text>
</comment>
<comment type="subunit">
    <text evidence="1">Homodimer.</text>
</comment>
<comment type="similarity">
    <text evidence="1">Belongs to the UPP synthase family.</text>
</comment>
<evidence type="ECO:0000255" key="1">
    <source>
        <dbReference type="HAMAP-Rule" id="MF_01139"/>
    </source>
</evidence>
<evidence type="ECO:0000305" key="2"/>
<proteinExistence type="inferred from homology"/>
<protein>
    <recommendedName>
        <fullName evidence="1">Isoprenyl transferase</fullName>
        <ecNumber evidence="1">2.5.1.-</ecNumber>
    </recommendedName>
</protein>
<name>ISPT_TRIV2</name>
<reference key="1">
    <citation type="thesis" date="1999" institute="University of Bonn" country="Germany">
        <authorList>
            <person name="Pohl B."/>
        </authorList>
    </citation>
    <scope>NUCLEOTIDE SEQUENCE [GENOMIC DNA]</scope>
</reference>
<reference key="2">
    <citation type="journal article" date="2014" name="Stand. Genomic Sci.">
        <title>Complete genome sequence of Anabaena variabilis ATCC 29413.</title>
        <authorList>
            <person name="Thiel T."/>
            <person name="Pratte B.S."/>
            <person name="Zhong J."/>
            <person name="Goodwin L."/>
            <person name="Copeland A."/>
            <person name="Lucas S."/>
            <person name="Han C."/>
            <person name="Pitluck S."/>
            <person name="Land M.L."/>
            <person name="Kyrpides N.C."/>
            <person name="Woyke T."/>
        </authorList>
    </citation>
    <scope>NUCLEOTIDE SEQUENCE [LARGE SCALE GENOMIC DNA]</scope>
    <source>
        <strain>ATCC 29413 / PCC 7937</strain>
    </source>
</reference>
<sequence>MTIQQTELQELPLDLKRELLPKHVAVIMDGNGRWAKRQGLPRIMGHKRGVDALKDLLRCCRDWGIQALTAYAFSTENWKRPQEEVEFLMTLFQRVLRQELREMVEENVQIQFVGNLAALPRSLQAEISRSMEATKNNRGIRFSVATNYGGRQEILQACRAIAQKVQQGLLQPDEIDEEVFERHLYTAGIADPDLLIRTSGEMRLSNFLLWQMAYGEIYITDTLWPDFDRTEFHRALCAYQQRERRFGKV</sequence>
<keyword id="KW-0460">Magnesium</keyword>
<keyword id="KW-0479">Metal-binding</keyword>
<keyword id="KW-0808">Transferase</keyword>
<organism>
    <name type="scientific">Trichormus variabilis (strain ATCC 29413 / PCC 7937)</name>
    <name type="common">Anabaena variabilis</name>
    <dbReference type="NCBI Taxonomy" id="240292"/>
    <lineage>
        <taxon>Bacteria</taxon>
        <taxon>Bacillati</taxon>
        <taxon>Cyanobacteriota</taxon>
        <taxon>Cyanophyceae</taxon>
        <taxon>Nostocales</taxon>
        <taxon>Nostocaceae</taxon>
        <taxon>Trichormus</taxon>
    </lineage>
</organism>
<accession>Q9ZEJ7</accession>
<accession>Q3MEP8</accession>
<dbReference type="EC" id="2.5.1.-" evidence="1"/>
<dbReference type="EMBL" id="AJ132706">
    <property type="protein sequence ID" value="CAA10743.1"/>
    <property type="molecule type" value="Genomic_DNA"/>
</dbReference>
<dbReference type="EMBL" id="CP000117">
    <property type="protein sequence ID" value="ABA20538.1"/>
    <property type="molecule type" value="Genomic_DNA"/>
</dbReference>
<dbReference type="SMR" id="Q9ZEJ7"/>
<dbReference type="STRING" id="240292.Ava_0914"/>
<dbReference type="KEGG" id="ava:Ava_0914"/>
<dbReference type="eggNOG" id="COG0020">
    <property type="taxonomic scope" value="Bacteria"/>
</dbReference>
<dbReference type="HOGENOM" id="CLU_038505_1_1_3"/>
<dbReference type="Proteomes" id="UP000002533">
    <property type="component" value="Chromosome"/>
</dbReference>
<dbReference type="GO" id="GO:0045547">
    <property type="term" value="F:ditrans,polycis-polyprenyl diphosphate synthase [(2E,6E)-farnesyl diphosphate specific] activity"/>
    <property type="evidence" value="ECO:0007669"/>
    <property type="project" value="TreeGrafter"/>
</dbReference>
<dbReference type="GO" id="GO:0000287">
    <property type="term" value="F:magnesium ion binding"/>
    <property type="evidence" value="ECO:0007669"/>
    <property type="project" value="UniProtKB-UniRule"/>
</dbReference>
<dbReference type="GO" id="GO:0016094">
    <property type="term" value="P:polyprenol biosynthetic process"/>
    <property type="evidence" value="ECO:0007669"/>
    <property type="project" value="TreeGrafter"/>
</dbReference>
<dbReference type="CDD" id="cd00475">
    <property type="entry name" value="Cis_IPPS"/>
    <property type="match status" value="1"/>
</dbReference>
<dbReference type="FunFam" id="3.40.1180.10:FF:000001">
    <property type="entry name" value="(2E,6E)-farnesyl-diphosphate-specific ditrans,polycis-undecaprenyl-diphosphate synthase"/>
    <property type="match status" value="1"/>
</dbReference>
<dbReference type="Gene3D" id="3.40.1180.10">
    <property type="entry name" value="Decaprenyl diphosphate synthase-like"/>
    <property type="match status" value="1"/>
</dbReference>
<dbReference type="HAMAP" id="MF_01139">
    <property type="entry name" value="ISPT"/>
    <property type="match status" value="1"/>
</dbReference>
<dbReference type="InterPro" id="IPR001441">
    <property type="entry name" value="UPP_synth-like"/>
</dbReference>
<dbReference type="InterPro" id="IPR018520">
    <property type="entry name" value="UPP_synth-like_CS"/>
</dbReference>
<dbReference type="InterPro" id="IPR036424">
    <property type="entry name" value="UPP_synth-like_sf"/>
</dbReference>
<dbReference type="NCBIfam" id="NF011405">
    <property type="entry name" value="PRK14830.1"/>
    <property type="match status" value="1"/>
</dbReference>
<dbReference type="NCBIfam" id="NF011406">
    <property type="entry name" value="PRK14831.1"/>
    <property type="match status" value="1"/>
</dbReference>
<dbReference type="NCBIfam" id="TIGR00055">
    <property type="entry name" value="uppS"/>
    <property type="match status" value="1"/>
</dbReference>
<dbReference type="PANTHER" id="PTHR10291:SF0">
    <property type="entry name" value="DEHYDRODOLICHYL DIPHOSPHATE SYNTHASE 2"/>
    <property type="match status" value="1"/>
</dbReference>
<dbReference type="PANTHER" id="PTHR10291">
    <property type="entry name" value="DEHYDRODOLICHYL DIPHOSPHATE SYNTHASE FAMILY MEMBER"/>
    <property type="match status" value="1"/>
</dbReference>
<dbReference type="Pfam" id="PF01255">
    <property type="entry name" value="Prenyltransf"/>
    <property type="match status" value="1"/>
</dbReference>
<dbReference type="SUPFAM" id="SSF64005">
    <property type="entry name" value="Undecaprenyl diphosphate synthase"/>
    <property type="match status" value="1"/>
</dbReference>
<dbReference type="PROSITE" id="PS01066">
    <property type="entry name" value="UPP_SYNTHASE"/>
    <property type="match status" value="1"/>
</dbReference>
<gene>
    <name evidence="1" type="primary">uppS</name>
    <name type="ordered locus">Ava_0914</name>
</gene>